<accession>A9R587</accession>
<proteinExistence type="inferred from homology"/>
<protein>
    <recommendedName>
        <fullName evidence="1">Large ribosomal subunit protein bL21</fullName>
    </recommendedName>
    <alternativeName>
        <fullName evidence="2">50S ribosomal protein L21</fullName>
    </alternativeName>
</protein>
<name>RL21_YERPG</name>
<comment type="function">
    <text evidence="1">This protein binds to 23S rRNA in the presence of protein L20.</text>
</comment>
<comment type="subunit">
    <text evidence="1">Part of the 50S ribosomal subunit. Contacts protein L20.</text>
</comment>
<comment type="similarity">
    <text evidence="1">Belongs to the bacterial ribosomal protein bL21 family.</text>
</comment>
<dbReference type="EMBL" id="CP000901">
    <property type="protein sequence ID" value="ABX87203.1"/>
    <property type="molecule type" value="Genomic_DNA"/>
</dbReference>
<dbReference type="RefSeq" id="WP_002210178.1">
    <property type="nucleotide sequence ID" value="NZ_CP009935.1"/>
</dbReference>
<dbReference type="SMR" id="A9R587"/>
<dbReference type="GeneID" id="57975202"/>
<dbReference type="KEGG" id="ypg:YpAngola_A3974"/>
<dbReference type="PATRIC" id="fig|349746.12.peg.699"/>
<dbReference type="GO" id="GO:0005737">
    <property type="term" value="C:cytoplasm"/>
    <property type="evidence" value="ECO:0007669"/>
    <property type="project" value="UniProtKB-ARBA"/>
</dbReference>
<dbReference type="GO" id="GO:1990904">
    <property type="term" value="C:ribonucleoprotein complex"/>
    <property type="evidence" value="ECO:0007669"/>
    <property type="project" value="UniProtKB-KW"/>
</dbReference>
<dbReference type="GO" id="GO:0005840">
    <property type="term" value="C:ribosome"/>
    <property type="evidence" value="ECO:0007669"/>
    <property type="project" value="UniProtKB-KW"/>
</dbReference>
<dbReference type="GO" id="GO:0019843">
    <property type="term" value="F:rRNA binding"/>
    <property type="evidence" value="ECO:0007669"/>
    <property type="project" value="UniProtKB-UniRule"/>
</dbReference>
<dbReference type="GO" id="GO:0003735">
    <property type="term" value="F:structural constituent of ribosome"/>
    <property type="evidence" value="ECO:0007669"/>
    <property type="project" value="InterPro"/>
</dbReference>
<dbReference type="GO" id="GO:0006412">
    <property type="term" value="P:translation"/>
    <property type="evidence" value="ECO:0007669"/>
    <property type="project" value="UniProtKB-UniRule"/>
</dbReference>
<dbReference type="HAMAP" id="MF_01363">
    <property type="entry name" value="Ribosomal_bL21"/>
    <property type="match status" value="1"/>
</dbReference>
<dbReference type="InterPro" id="IPR028909">
    <property type="entry name" value="bL21-like"/>
</dbReference>
<dbReference type="InterPro" id="IPR036164">
    <property type="entry name" value="bL21-like_sf"/>
</dbReference>
<dbReference type="InterPro" id="IPR001787">
    <property type="entry name" value="Ribosomal_bL21"/>
</dbReference>
<dbReference type="InterPro" id="IPR018258">
    <property type="entry name" value="Ribosomal_bL21_CS"/>
</dbReference>
<dbReference type="NCBIfam" id="TIGR00061">
    <property type="entry name" value="L21"/>
    <property type="match status" value="1"/>
</dbReference>
<dbReference type="PANTHER" id="PTHR21349">
    <property type="entry name" value="50S RIBOSOMAL PROTEIN L21"/>
    <property type="match status" value="1"/>
</dbReference>
<dbReference type="PANTHER" id="PTHR21349:SF0">
    <property type="entry name" value="LARGE RIBOSOMAL SUBUNIT PROTEIN BL21M"/>
    <property type="match status" value="1"/>
</dbReference>
<dbReference type="Pfam" id="PF00829">
    <property type="entry name" value="Ribosomal_L21p"/>
    <property type="match status" value="1"/>
</dbReference>
<dbReference type="SUPFAM" id="SSF141091">
    <property type="entry name" value="L21p-like"/>
    <property type="match status" value="1"/>
</dbReference>
<dbReference type="PROSITE" id="PS01169">
    <property type="entry name" value="RIBOSOMAL_L21"/>
    <property type="match status" value="1"/>
</dbReference>
<sequence>MYAVFQSGGKQHRVSEGQTIRLEKLDIATGETIEFDQVLMIANGEEINIGAPLVDGGKIKAEIIAHGRGEKIKIVKFRRRKHYRKQQGHRQWFTDVKITGISA</sequence>
<evidence type="ECO:0000255" key="1">
    <source>
        <dbReference type="HAMAP-Rule" id="MF_01363"/>
    </source>
</evidence>
<evidence type="ECO:0000305" key="2"/>
<feature type="chain" id="PRO_1000143874" description="Large ribosomal subunit protein bL21">
    <location>
        <begin position="1"/>
        <end position="103"/>
    </location>
</feature>
<gene>
    <name evidence="1" type="primary">rplU</name>
    <name type="ordered locus">YpAngola_A3974</name>
</gene>
<keyword id="KW-0687">Ribonucleoprotein</keyword>
<keyword id="KW-0689">Ribosomal protein</keyword>
<keyword id="KW-0694">RNA-binding</keyword>
<keyword id="KW-0699">rRNA-binding</keyword>
<reference key="1">
    <citation type="journal article" date="2010" name="J. Bacteriol.">
        <title>Genome sequence of the deep-rooted Yersinia pestis strain Angola reveals new insights into the evolution and pangenome of the plague bacterium.</title>
        <authorList>
            <person name="Eppinger M."/>
            <person name="Worsham P.L."/>
            <person name="Nikolich M.P."/>
            <person name="Riley D.R."/>
            <person name="Sebastian Y."/>
            <person name="Mou S."/>
            <person name="Achtman M."/>
            <person name="Lindler L.E."/>
            <person name="Ravel J."/>
        </authorList>
    </citation>
    <scope>NUCLEOTIDE SEQUENCE [LARGE SCALE GENOMIC DNA]</scope>
    <source>
        <strain>Angola</strain>
    </source>
</reference>
<organism>
    <name type="scientific">Yersinia pestis bv. Antiqua (strain Angola)</name>
    <dbReference type="NCBI Taxonomy" id="349746"/>
    <lineage>
        <taxon>Bacteria</taxon>
        <taxon>Pseudomonadati</taxon>
        <taxon>Pseudomonadota</taxon>
        <taxon>Gammaproteobacteria</taxon>
        <taxon>Enterobacterales</taxon>
        <taxon>Yersiniaceae</taxon>
        <taxon>Yersinia</taxon>
    </lineage>
</organism>